<accession>A4SMN1</accession>
<keyword id="KW-0963">Cytoplasm</keyword>
<keyword id="KW-0238">DNA-binding</keyword>
<reference key="1">
    <citation type="journal article" date="2008" name="BMC Genomics">
        <title>The genome of Aeromonas salmonicida subsp. salmonicida A449: insights into the evolution of a fish pathogen.</title>
        <authorList>
            <person name="Reith M.E."/>
            <person name="Singh R.K."/>
            <person name="Curtis B."/>
            <person name="Boyd J.M."/>
            <person name="Bouevitch A."/>
            <person name="Kimball J."/>
            <person name="Munholland J."/>
            <person name="Murphy C."/>
            <person name="Sarty D."/>
            <person name="Williams J."/>
            <person name="Nash J.H."/>
            <person name="Johnson S.C."/>
            <person name="Brown L.L."/>
        </authorList>
    </citation>
    <scope>NUCLEOTIDE SEQUENCE [LARGE SCALE GENOMIC DNA]</scope>
    <source>
        <strain>A449</strain>
    </source>
</reference>
<feature type="chain" id="PRO_1000003677" description="Nucleoid-associated protein ASA_2087">
    <location>
        <begin position="1"/>
        <end position="109"/>
    </location>
</feature>
<feature type="region of interest" description="Disordered" evidence="2">
    <location>
        <begin position="1"/>
        <end position="23"/>
    </location>
</feature>
<feature type="region of interest" description="Disordered" evidence="2">
    <location>
        <begin position="87"/>
        <end position="109"/>
    </location>
</feature>
<feature type="compositionally biased region" description="Low complexity" evidence="2">
    <location>
        <begin position="11"/>
        <end position="23"/>
    </location>
</feature>
<dbReference type="EMBL" id="CP000644">
    <property type="protein sequence ID" value="ABO90153.1"/>
    <property type="molecule type" value="Genomic_DNA"/>
</dbReference>
<dbReference type="RefSeq" id="WP_011898717.1">
    <property type="nucleotide sequence ID" value="NC_009348.1"/>
</dbReference>
<dbReference type="SMR" id="A4SMN1"/>
<dbReference type="STRING" id="29491.GCA_000820065_00696"/>
<dbReference type="KEGG" id="asa:ASA_2087"/>
<dbReference type="eggNOG" id="COG0718">
    <property type="taxonomic scope" value="Bacteria"/>
</dbReference>
<dbReference type="HOGENOM" id="CLU_140930_0_0_6"/>
<dbReference type="Proteomes" id="UP000000225">
    <property type="component" value="Chromosome"/>
</dbReference>
<dbReference type="GO" id="GO:0043590">
    <property type="term" value="C:bacterial nucleoid"/>
    <property type="evidence" value="ECO:0007669"/>
    <property type="project" value="UniProtKB-UniRule"/>
</dbReference>
<dbReference type="GO" id="GO:0005829">
    <property type="term" value="C:cytosol"/>
    <property type="evidence" value="ECO:0007669"/>
    <property type="project" value="TreeGrafter"/>
</dbReference>
<dbReference type="GO" id="GO:0003677">
    <property type="term" value="F:DNA binding"/>
    <property type="evidence" value="ECO:0007669"/>
    <property type="project" value="UniProtKB-UniRule"/>
</dbReference>
<dbReference type="FunFam" id="3.30.1310.10:FF:000001">
    <property type="entry name" value="Nucleoid-associated protein YbaB"/>
    <property type="match status" value="1"/>
</dbReference>
<dbReference type="Gene3D" id="3.30.1310.10">
    <property type="entry name" value="Nucleoid-associated protein YbaB-like domain"/>
    <property type="match status" value="1"/>
</dbReference>
<dbReference type="HAMAP" id="MF_00274">
    <property type="entry name" value="DNA_YbaB_EbfC"/>
    <property type="match status" value="1"/>
</dbReference>
<dbReference type="InterPro" id="IPR036894">
    <property type="entry name" value="YbaB-like_sf"/>
</dbReference>
<dbReference type="InterPro" id="IPR004401">
    <property type="entry name" value="YbaB/EbfC"/>
</dbReference>
<dbReference type="NCBIfam" id="TIGR00103">
    <property type="entry name" value="DNA_YbaB_EbfC"/>
    <property type="match status" value="1"/>
</dbReference>
<dbReference type="PANTHER" id="PTHR33449">
    <property type="entry name" value="NUCLEOID-ASSOCIATED PROTEIN YBAB"/>
    <property type="match status" value="1"/>
</dbReference>
<dbReference type="PANTHER" id="PTHR33449:SF1">
    <property type="entry name" value="NUCLEOID-ASSOCIATED PROTEIN YBAB"/>
    <property type="match status" value="1"/>
</dbReference>
<dbReference type="Pfam" id="PF02575">
    <property type="entry name" value="YbaB_DNA_bd"/>
    <property type="match status" value="1"/>
</dbReference>
<dbReference type="PIRSF" id="PIRSF004555">
    <property type="entry name" value="UCP004555"/>
    <property type="match status" value="1"/>
</dbReference>
<dbReference type="SUPFAM" id="SSF82607">
    <property type="entry name" value="YbaB-like"/>
    <property type="match status" value="1"/>
</dbReference>
<evidence type="ECO:0000255" key="1">
    <source>
        <dbReference type="HAMAP-Rule" id="MF_00274"/>
    </source>
</evidence>
<evidence type="ECO:0000256" key="2">
    <source>
        <dbReference type="SAM" id="MobiDB-lite"/>
    </source>
</evidence>
<name>Y2087_AERS4</name>
<protein>
    <recommendedName>
        <fullName evidence="1">Nucleoid-associated protein ASA_2087</fullName>
    </recommendedName>
</protein>
<gene>
    <name type="ordered locus">ASA_2087</name>
</gene>
<sequence>MFGKGGMGNLMKQAQQMQERMQKMQEQLAEMEVVGEAGAGMVKVTMAGSHSVRRIEIDQSLMEDDKEMIEDLVAAAVNDAVRRVEEQSKSKMGELTGGMQLPPGMKLPF</sequence>
<proteinExistence type="inferred from homology"/>
<comment type="function">
    <text evidence="1">Binds to DNA and alters its conformation. May be involved in regulation of gene expression, nucleoid organization and DNA protection.</text>
</comment>
<comment type="subunit">
    <text evidence="1">Homodimer.</text>
</comment>
<comment type="subcellular location">
    <subcellularLocation>
        <location evidence="1">Cytoplasm</location>
        <location evidence="1">Nucleoid</location>
    </subcellularLocation>
</comment>
<comment type="similarity">
    <text evidence="1">Belongs to the YbaB/EbfC family.</text>
</comment>
<organism>
    <name type="scientific">Aeromonas salmonicida (strain A449)</name>
    <dbReference type="NCBI Taxonomy" id="382245"/>
    <lineage>
        <taxon>Bacteria</taxon>
        <taxon>Pseudomonadati</taxon>
        <taxon>Pseudomonadota</taxon>
        <taxon>Gammaproteobacteria</taxon>
        <taxon>Aeromonadales</taxon>
        <taxon>Aeromonadaceae</taxon>
        <taxon>Aeromonas</taxon>
    </lineage>
</organism>